<proteinExistence type="evidence at transcript level"/>
<organism>
    <name type="scientific">Danio rerio</name>
    <name type="common">Zebrafish</name>
    <name type="synonym">Brachydanio rerio</name>
    <dbReference type="NCBI Taxonomy" id="7955"/>
    <lineage>
        <taxon>Eukaryota</taxon>
        <taxon>Metazoa</taxon>
        <taxon>Chordata</taxon>
        <taxon>Craniata</taxon>
        <taxon>Vertebrata</taxon>
        <taxon>Euteleostomi</taxon>
        <taxon>Actinopterygii</taxon>
        <taxon>Neopterygii</taxon>
        <taxon>Teleostei</taxon>
        <taxon>Ostariophysi</taxon>
        <taxon>Cypriniformes</taxon>
        <taxon>Danionidae</taxon>
        <taxon>Danioninae</taxon>
        <taxon>Danio</taxon>
    </lineage>
</organism>
<feature type="chain" id="PRO_0000378921" description="Mitochondrial glycine transporter B">
    <location>
        <begin position="1"/>
        <end position="287"/>
    </location>
</feature>
<feature type="transmembrane region" description="Helical; Name=1" evidence="3">
    <location>
        <begin position="13"/>
        <end position="38"/>
    </location>
</feature>
<feature type="transmembrane region" description="Helical; Name=2" evidence="3">
    <location>
        <begin position="72"/>
        <end position="98"/>
    </location>
</feature>
<feature type="transmembrane region" description="Helical; Name=3" evidence="3">
    <location>
        <begin position="110"/>
        <end position="135"/>
    </location>
</feature>
<feature type="transmembrane region" description="Helical; Name=4" evidence="3">
    <location>
        <begin position="163"/>
        <end position="186"/>
    </location>
</feature>
<feature type="transmembrane region" description="Helical; Name=5" evidence="3">
    <location>
        <begin position="202"/>
        <end position="228"/>
    </location>
</feature>
<feature type="transmembrane region" description="Helical; Name=6" evidence="3">
    <location>
        <begin position="257"/>
        <end position="275"/>
    </location>
</feature>
<feature type="repeat" description="Solcar 1" evidence="3">
    <location>
        <begin position="7"/>
        <end position="97"/>
    </location>
</feature>
<feature type="repeat" description="Solcar 2" evidence="3">
    <location>
        <begin position="104"/>
        <end position="188"/>
    </location>
</feature>
<feature type="repeat" description="Solcar 3" evidence="3">
    <location>
        <begin position="198"/>
        <end position="282"/>
    </location>
</feature>
<gene>
    <name type="primary">slc25a38b</name>
</gene>
<dbReference type="EMBL" id="CR925711">
    <property type="status" value="NOT_ANNOTATED_CDS"/>
    <property type="molecule type" value="Genomic_DNA"/>
</dbReference>
<dbReference type="RefSeq" id="NP_001189387.1">
    <property type="nucleotide sequence ID" value="NM_001202458.1"/>
</dbReference>
<dbReference type="SMR" id="P0CAT2"/>
<dbReference type="FunCoup" id="P0CAT2">
    <property type="interactions" value="1160"/>
</dbReference>
<dbReference type="STRING" id="7955.ENSDARP00000126117"/>
<dbReference type="PaxDb" id="7955-ENSDARP00000106419"/>
<dbReference type="Ensembl" id="ENSDART00000151545">
    <property type="protein sequence ID" value="ENSDARP00000126117"/>
    <property type="gene ID" value="ENSDARG00000074533"/>
</dbReference>
<dbReference type="GeneID" id="571961"/>
<dbReference type="KEGG" id="dre:571961"/>
<dbReference type="AGR" id="ZFIN:ZDB-GENE-110214-1"/>
<dbReference type="CTD" id="571961"/>
<dbReference type="ZFIN" id="ZDB-GENE-110214-1">
    <property type="gene designation" value="slc25a38b"/>
</dbReference>
<dbReference type="eggNOG" id="KOG0766">
    <property type="taxonomic scope" value="Eukaryota"/>
</dbReference>
<dbReference type="HOGENOM" id="CLU_015166_0_3_1"/>
<dbReference type="InParanoid" id="P0CAT2"/>
<dbReference type="OMA" id="RYESFHY"/>
<dbReference type="OrthoDB" id="1924968at2759"/>
<dbReference type="PRO" id="PR:P0CAT2"/>
<dbReference type="Proteomes" id="UP000000437">
    <property type="component" value="Chromosome 6"/>
</dbReference>
<dbReference type="Bgee" id="ENSDARG00000074533">
    <property type="expression patterns" value="Expressed in cleaving embryo and 28 other cell types or tissues"/>
</dbReference>
<dbReference type="ExpressionAtlas" id="P0CAT2">
    <property type="expression patterns" value="baseline and differential"/>
</dbReference>
<dbReference type="GO" id="GO:0005743">
    <property type="term" value="C:mitochondrial inner membrane"/>
    <property type="evidence" value="ECO:0000250"/>
    <property type="project" value="UniProtKB"/>
</dbReference>
<dbReference type="GO" id="GO:0005739">
    <property type="term" value="C:mitochondrion"/>
    <property type="evidence" value="ECO:0000318"/>
    <property type="project" value="GO_Central"/>
</dbReference>
<dbReference type="GO" id="GO:0015187">
    <property type="term" value="F:glycine transmembrane transporter activity"/>
    <property type="evidence" value="ECO:0000318"/>
    <property type="project" value="GO_Central"/>
</dbReference>
<dbReference type="GO" id="GO:0030218">
    <property type="term" value="P:erythrocyte differentiation"/>
    <property type="evidence" value="ECO:0000315"/>
    <property type="project" value="UniProtKB"/>
</dbReference>
<dbReference type="GO" id="GO:1904983">
    <property type="term" value="P:glycine import into mitochondrion"/>
    <property type="evidence" value="ECO:0000318"/>
    <property type="project" value="GO_Central"/>
</dbReference>
<dbReference type="GO" id="GO:0042541">
    <property type="term" value="P:hemoglobin biosynthetic process"/>
    <property type="evidence" value="ECO:0000316"/>
    <property type="project" value="ZFIN"/>
</dbReference>
<dbReference type="GO" id="GO:0020027">
    <property type="term" value="P:hemoglobin metabolic process"/>
    <property type="evidence" value="ECO:0000316"/>
    <property type="project" value="ZFIN"/>
</dbReference>
<dbReference type="FunFam" id="1.50.40.10:FF:000036">
    <property type="entry name" value="Mitochondrial glycine transporter B"/>
    <property type="match status" value="1"/>
</dbReference>
<dbReference type="Gene3D" id="1.50.40.10">
    <property type="entry name" value="Mitochondrial carrier domain"/>
    <property type="match status" value="1"/>
</dbReference>
<dbReference type="HAMAP" id="MF_03064">
    <property type="entry name" value="SLC25A38"/>
    <property type="match status" value="1"/>
</dbReference>
<dbReference type="InterPro" id="IPR030847">
    <property type="entry name" value="Hem25/SLC25A38"/>
</dbReference>
<dbReference type="InterPro" id="IPR002067">
    <property type="entry name" value="Mit_carrier"/>
</dbReference>
<dbReference type="InterPro" id="IPR018108">
    <property type="entry name" value="Mitochondrial_sb/sol_carrier"/>
</dbReference>
<dbReference type="InterPro" id="IPR023395">
    <property type="entry name" value="Mt_carrier_dom_sf"/>
</dbReference>
<dbReference type="PANTHER" id="PTHR46181">
    <property type="entry name" value="MITOCHONDRIAL GLYCINE TRANSPORTER"/>
    <property type="match status" value="1"/>
</dbReference>
<dbReference type="PANTHER" id="PTHR46181:SF2">
    <property type="entry name" value="MITOCHONDRIAL GLYCINE TRANSPORTER B"/>
    <property type="match status" value="1"/>
</dbReference>
<dbReference type="Pfam" id="PF00153">
    <property type="entry name" value="Mito_carr"/>
    <property type="match status" value="3"/>
</dbReference>
<dbReference type="PRINTS" id="PR00926">
    <property type="entry name" value="MITOCARRIER"/>
</dbReference>
<dbReference type="SUPFAM" id="SSF103506">
    <property type="entry name" value="Mitochondrial carrier"/>
    <property type="match status" value="1"/>
</dbReference>
<dbReference type="PROSITE" id="PS50920">
    <property type="entry name" value="SOLCAR"/>
    <property type="match status" value="3"/>
</dbReference>
<comment type="function">
    <text evidence="3">Mitochondrial glycine transporter that imports glycine into the mitochondrial matrix. Plays an important role in providing glycine for the first enzymatic step in heme biosynthesis, the condensation of glycine with succinyl-CoA to produce 5-aminolevulinate (ALA) in the mitochondrial matrix. Required during erythropoiesis.</text>
</comment>
<comment type="function">
    <text evidence="1">May play a role as pro-apoptotic protein that induces caspase-dependent apoptosis.</text>
</comment>
<comment type="catalytic activity">
    <reaction evidence="2">
        <text>glycine(in) = glycine(out)</text>
        <dbReference type="Rhea" id="RHEA:70715"/>
        <dbReference type="ChEBI" id="CHEBI:57305"/>
    </reaction>
</comment>
<comment type="subcellular location">
    <subcellularLocation>
        <location evidence="3">Mitochondrion inner membrane</location>
        <topology evidence="3">Multi-pass membrane protein</topology>
    </subcellularLocation>
</comment>
<comment type="tissue specificity">
    <text evidence="5">At 24 hours post-fertilization, expressed predominantly in posterior blood island, posterior cardinal vein and circulating blood. At 34 hours post-fertilization, becomes restricted to posterior blood island and circulating blood.</text>
</comment>
<comment type="disruption phenotype">
    <text evidence="4">Fishes lacking both slc25a38a and slc25a38b display anemia.</text>
</comment>
<comment type="similarity">
    <text evidence="3">Belongs to the mitochondrial carrier (TC 2.A.29) family. SLC25A38 subfamily.</text>
</comment>
<protein>
    <recommendedName>
        <fullName evidence="3">Mitochondrial glycine transporter B</fullName>
    </recommendedName>
    <alternativeName>
        <fullName evidence="3">Solute carrier family 25 member 38-B</fullName>
    </alternativeName>
</protein>
<evidence type="ECO:0000250" key="1">
    <source>
        <dbReference type="UniProtKB" id="Q91XD8"/>
    </source>
</evidence>
<evidence type="ECO:0000250" key="2">
    <source>
        <dbReference type="UniProtKB" id="Q96DW6"/>
    </source>
</evidence>
<evidence type="ECO:0000255" key="3">
    <source>
        <dbReference type="HAMAP-Rule" id="MF_03064"/>
    </source>
</evidence>
<evidence type="ECO:0000269" key="4">
    <source>
    </source>
</evidence>
<evidence type="ECO:0000269" key="5">
    <source>
    </source>
</evidence>
<sequence>MEVALAHPALKAFMCGSLSGTCSTLLFQPLDLVKTRLQTLQNNMHPGAPKVGMITVLFNVIRTEKLLGLWKGVSPSFMRCIPGVGIYFSTFYSLKQHYFQEGSPSAGEAVLLGAGARCVAGVAMLPFTVIKTRFESGRYNYISVAGALKSVCQNEGPKALYSGLTATLLRDAPFSGIYVMFYSQAKKALPQEISSSSIAPLVNFGCGVVAGILASLATQPADVIKTHMQVSPALYPKTSDAMRHVYVKHGLSGFFRGAVPRSLRRTLMAAMAWTVYEQLMARMGLKS</sequence>
<accession>P0CAT2</accession>
<accession>I3IT61</accession>
<keyword id="KW-0472">Membrane</keyword>
<keyword id="KW-0496">Mitochondrion</keyword>
<keyword id="KW-0999">Mitochondrion inner membrane</keyword>
<keyword id="KW-1185">Reference proteome</keyword>
<keyword id="KW-0677">Repeat</keyword>
<keyword id="KW-0812">Transmembrane</keyword>
<keyword id="KW-1133">Transmembrane helix</keyword>
<keyword id="KW-0813">Transport</keyword>
<reference key="1">
    <citation type="journal article" date="2013" name="Nature">
        <title>The zebrafish reference genome sequence and its relationship to the human genome.</title>
        <authorList>
            <person name="Howe K."/>
            <person name="Clark M.D."/>
            <person name="Torroja C.F."/>
            <person name="Torrance J."/>
            <person name="Berthelot C."/>
            <person name="Muffato M."/>
            <person name="Collins J.E."/>
            <person name="Humphray S."/>
            <person name="McLaren K."/>
            <person name="Matthews L."/>
            <person name="McLaren S."/>
            <person name="Sealy I."/>
            <person name="Caccamo M."/>
            <person name="Churcher C."/>
            <person name="Scott C."/>
            <person name="Barrett J.C."/>
            <person name="Koch R."/>
            <person name="Rauch G.J."/>
            <person name="White S."/>
            <person name="Chow W."/>
            <person name="Kilian B."/>
            <person name="Quintais L.T."/>
            <person name="Guerra-Assuncao J.A."/>
            <person name="Zhou Y."/>
            <person name="Gu Y."/>
            <person name="Yen J."/>
            <person name="Vogel J.H."/>
            <person name="Eyre T."/>
            <person name="Redmond S."/>
            <person name="Banerjee R."/>
            <person name="Chi J."/>
            <person name="Fu B."/>
            <person name="Langley E."/>
            <person name="Maguire S.F."/>
            <person name="Laird G.K."/>
            <person name="Lloyd D."/>
            <person name="Kenyon E."/>
            <person name="Donaldson S."/>
            <person name="Sehra H."/>
            <person name="Almeida-King J."/>
            <person name="Loveland J."/>
            <person name="Trevanion S."/>
            <person name="Jones M."/>
            <person name="Quail M."/>
            <person name="Willey D."/>
            <person name="Hunt A."/>
            <person name="Burton J."/>
            <person name="Sims S."/>
            <person name="McLay K."/>
            <person name="Plumb B."/>
            <person name="Davis J."/>
            <person name="Clee C."/>
            <person name="Oliver K."/>
            <person name="Clark R."/>
            <person name="Riddle C."/>
            <person name="Elliot D."/>
            <person name="Threadgold G."/>
            <person name="Harden G."/>
            <person name="Ware D."/>
            <person name="Begum S."/>
            <person name="Mortimore B."/>
            <person name="Kerry G."/>
            <person name="Heath P."/>
            <person name="Phillimore B."/>
            <person name="Tracey A."/>
            <person name="Corby N."/>
            <person name="Dunn M."/>
            <person name="Johnson C."/>
            <person name="Wood J."/>
            <person name="Clark S."/>
            <person name="Pelan S."/>
            <person name="Griffiths G."/>
            <person name="Smith M."/>
            <person name="Glithero R."/>
            <person name="Howden P."/>
            <person name="Barker N."/>
            <person name="Lloyd C."/>
            <person name="Stevens C."/>
            <person name="Harley J."/>
            <person name="Holt K."/>
            <person name="Panagiotidis G."/>
            <person name="Lovell J."/>
            <person name="Beasley H."/>
            <person name="Henderson C."/>
            <person name="Gordon D."/>
            <person name="Auger K."/>
            <person name="Wright D."/>
            <person name="Collins J."/>
            <person name="Raisen C."/>
            <person name="Dyer L."/>
            <person name="Leung K."/>
            <person name="Robertson L."/>
            <person name="Ambridge K."/>
            <person name="Leongamornlert D."/>
            <person name="McGuire S."/>
            <person name="Gilderthorp R."/>
            <person name="Griffiths C."/>
            <person name="Manthravadi D."/>
            <person name="Nichol S."/>
            <person name="Barker G."/>
            <person name="Whitehead S."/>
            <person name="Kay M."/>
            <person name="Brown J."/>
            <person name="Murnane C."/>
            <person name="Gray E."/>
            <person name="Humphries M."/>
            <person name="Sycamore N."/>
            <person name="Barker D."/>
            <person name="Saunders D."/>
            <person name="Wallis J."/>
            <person name="Babbage A."/>
            <person name="Hammond S."/>
            <person name="Mashreghi-Mohammadi M."/>
            <person name="Barr L."/>
            <person name="Martin S."/>
            <person name="Wray P."/>
            <person name="Ellington A."/>
            <person name="Matthews N."/>
            <person name="Ellwood M."/>
            <person name="Woodmansey R."/>
            <person name="Clark G."/>
            <person name="Cooper J."/>
            <person name="Tromans A."/>
            <person name="Grafham D."/>
            <person name="Skuce C."/>
            <person name="Pandian R."/>
            <person name="Andrews R."/>
            <person name="Harrison E."/>
            <person name="Kimberley A."/>
            <person name="Garnett J."/>
            <person name="Fosker N."/>
            <person name="Hall R."/>
            <person name="Garner P."/>
            <person name="Kelly D."/>
            <person name="Bird C."/>
            <person name="Palmer S."/>
            <person name="Gehring I."/>
            <person name="Berger A."/>
            <person name="Dooley C.M."/>
            <person name="Ersan-Urun Z."/>
            <person name="Eser C."/>
            <person name="Geiger H."/>
            <person name="Geisler M."/>
            <person name="Karotki L."/>
            <person name="Kirn A."/>
            <person name="Konantz J."/>
            <person name="Konantz M."/>
            <person name="Oberlander M."/>
            <person name="Rudolph-Geiger S."/>
            <person name="Teucke M."/>
            <person name="Lanz C."/>
            <person name="Raddatz G."/>
            <person name="Osoegawa K."/>
            <person name="Zhu B."/>
            <person name="Rapp A."/>
            <person name="Widaa S."/>
            <person name="Langford C."/>
            <person name="Yang F."/>
            <person name="Schuster S.C."/>
            <person name="Carter N.P."/>
            <person name="Harrow J."/>
            <person name="Ning Z."/>
            <person name="Herrero J."/>
            <person name="Searle S.M."/>
            <person name="Enright A."/>
            <person name="Geisler R."/>
            <person name="Plasterk R.H."/>
            <person name="Lee C."/>
            <person name="Westerfield M."/>
            <person name="de Jong P.J."/>
            <person name="Zon L.I."/>
            <person name="Postlethwait J.H."/>
            <person name="Nusslein-Volhard C."/>
            <person name="Hubbard T.J."/>
            <person name="Roest Crollius H."/>
            <person name="Rogers J."/>
            <person name="Stemple D.L."/>
        </authorList>
    </citation>
    <scope>NUCLEOTIDE SEQUENCE [LARGE SCALE GENOMIC DNA]</scope>
    <source>
        <strain>Tuebingen</strain>
    </source>
</reference>
<reference key="2">
    <citation type="journal article" date="2009" name="Nat. Genet.">
        <title>Mutations in mitochondrial carrier family gene SLC25A38 cause nonsyndromic autosomal recessive congenital sideroblastic anemia.</title>
        <authorList>
            <person name="Guernsey D.L."/>
            <person name="Jiang H."/>
            <person name="Campagna D.R."/>
            <person name="Evans S.C."/>
            <person name="Ferguson M."/>
            <person name="Kellogg M.D."/>
            <person name="Lachance M."/>
            <person name="Matsuoka M."/>
            <person name="Nightingale M."/>
            <person name="Rideout A."/>
            <person name="Saint-Amant L."/>
            <person name="Schmidt P.J."/>
            <person name="Orr A."/>
            <person name="Bottomley S.S."/>
            <person name="Fleming M.D."/>
            <person name="Ludman M."/>
            <person name="Dyack S."/>
            <person name="Fernandez C.V."/>
            <person name="Samuels M.E."/>
        </authorList>
    </citation>
    <scope>DISRUPTION PHENOTYPE</scope>
</reference>
<reference key="3">
    <citation type="journal article" date="2016" name="PLoS Genet.">
        <title>Glycine and folate ameliorate models of congenital sideroblastic anemia.</title>
        <authorList>
            <person name="Fernandez-Murray J.P."/>
            <person name="Prykhozhij S.V."/>
            <person name="Dufay J.N."/>
            <person name="Steele S.L."/>
            <person name="Gaston D."/>
            <person name="Nasrallah G.K."/>
            <person name="Coombs A.J."/>
            <person name="Liwski R.S."/>
            <person name="Fernandez C.V."/>
            <person name="Berman J.N."/>
            <person name="McMaster C.R."/>
        </authorList>
    </citation>
    <scope>TISSUE SPECIFICITY</scope>
</reference>
<name>S238B_DANRE</name>